<keyword id="KW-0002">3D-structure</keyword>
<keyword id="KW-0165">Cleavage on pair of basic residues</keyword>
<keyword id="KW-0179">Complement alternate pathway</keyword>
<keyword id="KW-0180">Complement pathway</keyword>
<keyword id="KW-1015">Disulfide bond</keyword>
<keyword id="KW-0276">Fatty acid metabolism</keyword>
<keyword id="KW-0325">Glycoprotein</keyword>
<keyword id="KW-0391">Immunity</keyword>
<keyword id="KW-0395">Inflammatory response</keyword>
<keyword id="KW-0399">Innate immunity</keyword>
<keyword id="KW-0443">Lipid metabolism</keyword>
<keyword id="KW-0597">Phosphoprotein</keyword>
<keyword id="KW-1185">Reference proteome</keyword>
<keyword id="KW-0964">Secreted</keyword>
<keyword id="KW-0732">Signal</keyword>
<keyword id="KW-0882">Thioester bond</keyword>
<gene>
    <name type="primary">C3</name>
</gene>
<sequence>MKPTSGPSLLLLLLASLPMALGNPMYSMITPNILRLESEETVVLEAHGGQGTIQVSVTVHDFPAKKQVLSNENTQLNSNNGYLSTVTIKIPASKELKSDKGHKFVTVVATFGNVQVEKVVLISLQSGYLFIQTDKTIYTPGSTVLYRVFTVDHKLLPVGQTVFITIETPDGIPVKRDSKSSQNQFGILTLSWNIPELVNMGVWKIKAYYEDSPQQVFSAEFEVKEYVLPSFEVQLEPEEKFYYIDDPDGLKVNIIARFLYGEQVDGTAFVIFGVQDGDRRISLTHSLTRVPINDGNGEAILKRQVLLNGVQPSRADALVGKSIYVSATVILQSGSDMVEAERTGIPIVTSPYQIHFTKTPKFFKPAMPFDLMVYVTNPDGSPARHIPVVTQGSNVQSLTQDDGVAKLSINTQNKRDPLTITVRTKKDNIPEGRQATRTMQALPYNTQGNSNNYLHLSVPRVELKPGETLNVNFHLRTDPGEQAKIRYYTYMIMNKGKLLKVGRQYREPGQDLVVLPLTITSDFIPSFRLVAYYTLINAKGQREVVADSVWVDVKDSCMGTLVVKNGGKEEKHHRPGQQITLKIEADQGARVGLVAVDKGVFVLNKKNKLTQRKIWDVVEKADIGCTPGSGRNYAGVFTDAGLTLKTSQGLETQQRADPQCPQPATRRRRSVQLMEKRMDKAGQYSSDLRKCCEDGMRDNPMKFPCQRRAQFILQGDACVKAFLDCCEYITQLRQQHSRDGALELARSDLDDDIIPEEDIISRSQFPESWLWTVIEDLKQADKNGISTKLMNVFLKDSITTWEILAVSLSDKKGICVADPYEVTVMQDFFIDLRLPYSVVRNEQVEIRAILYNYREAENLKVRVELLYNPAFCSLATAKKRHQQTITIPARSSVAVPYVIVPLKIGLHEVEVKAAVYNHFISDGVKKTLKVVPEGVRVNKTVAVRTLNPEHLGQGGVQREEVPAADLSDQVPDTESETKILLQGTPVAQMTEDAIDGERLKHLIQTPSGCGEQNMIGMTPTVIAVHYLDSTDQWEKFGLEKRQESLELIRKGYTQQLAFRQKSSAYAAFQYRPPSTWLTAYVVKVFALAANLIAIDSKDLCETVKWLILEKQKPDGIFQEDGPVIHQEMIGGFRDTREKDVSLTAFVLIALHEAKDICEAQVNSLGRSIAKAGDFLENHYRELRRPYTVAIAAYALALLGKLEGDRLTKFLNTAKEKNRWEEPNQKLYNVEATSYALLALLARKDYDTTPPVVRWLNEQRYYGGGYGSTQATFMVFQALAQYQKDVPDHKELNLDVSIQLPSRNSAVRHRILWESASLLRSEETKENERFTVKAEGKGQGTLSVVTVYHAKLKGKVSCKKFDLRVSIRPAPETVKKPQDAKGSMILDICTKYLGDQDATMSILDISMMTGFSPDVEDLKTLSTGVDRYISKYEMNRDSNKNTLIIYLDKVSHTVEDCLSFKVHQYFNVGLIQPGAVKVYSYYNLDETCIRFYHPDKEDGMLSKLCHKDTCRCAEENCFMHHTEKEVTLEDRLDKACEPGVDYVYKTRLIQKKLEDDFDEYIMVIENIIKSGSDEVQVKQERKFISHIKCREALKLKEGAHYLVWGVSSDLWGEKPKISYIIGKDTWVELWPEAEECQDEENQKQCEDLANFTENMVVFGCPN</sequence>
<comment type="function">
    <text evidence="1">Precursor of non-enzymatic components of the classical, alternative, lectin and GZMK complement pathways, which consist in a cascade of proteins that leads to phagocytosis and breakdown of pathogens and signaling that strengthens the adaptive immune system.</text>
</comment>
<comment type="function">
    <molecule>Complement C3b</molecule>
    <text evidence="1">Non-enzymatic component of C5 convertase. Generated following cleavage by C3 convertase, it covalently attaches to the surface of pathogens, where it acts as an opsonin that marks the surface of antigens for removal. Complement C3b binds covalently via its reactive thioester, to cell surface carbohydrates or immune aggregates. Together with complement C4b, it then recruits the serine protease complement C2b to form the C5 convertase, which cleaves and activate C5, the next component of the complement pathways. In the alternative complement pathway, recruits the serine protease CFB to form the C5 convertase that cleaves and activates C5.</text>
</comment>
<comment type="function">
    <molecule>C3a anaphylatoxin</molecule>
    <text evidence="1">Mediator of local inflammatory process released following cleavage by C3 convertase. Acts by binding to its receptor, C3AR1, activating G protein-coupled receptor signaling, promoting the phosphorylation, ARRB2-mediated internalization and endocytosis of C3AR1. C3a anaphylatoxin stimulates the activation of immune cells such as mast cells and basophilic leukocytes to release inflammation agents, such as cytokines, chemokines and histamine, which promote inflammation development. Also acts as potent chemoattractant for the migration of macrophages and neutrophils to the inflamed tissues, resulting in neutralization of the inflammatory triggers by multiple ways, such as phagocytosis and generation of reactive oxidants.</text>
</comment>
<comment type="function">
    <molecule>Acylation stimulating protein</molecule>
    <text evidence="1">Adipogenic hormone that stimulates triglyceride synthesis and glucose transport in adipocytes, regulating fat storage and playing a role in postprandial triglyceride clearance. Appears to stimulate triglyceride synthesis via activation of the PLC, MAPK and AKT signaling pathways. Acts by binding to its receptor, C5AR2, activating G protein-coupled receptor signaling, promoting the phosphorylation, ARRB2-mediated internalization and endocytosis of C5AR2.</text>
</comment>
<comment type="function">
    <molecule>C3-beta-c</molecule>
    <text evidence="2">Acts as a chemoattractant for neutrophils in chronic inflammation.</text>
</comment>
<comment type="activity regulation">
    <text evidence="1">Complement activation is inhibited by VSIG4.</text>
</comment>
<comment type="subunit">
    <text evidence="6">(Microbial infection) Interacts with BHV-1 GLYCOPROTEIN C.</text>
</comment>
<comment type="subunit">
    <text evidence="1">In absence of complement activation, the C3 precursor is first processed by the removal of 4 Arg residues, forming two chains, beta and alpha, linked by a disulfide bond.</text>
</comment>
<comment type="subunit">
    <molecule>Complement C3b</molecule>
    <text evidence="1">Complement C3b is composed of complement C3b and complement C3 beta chains that are associated via disulfide bonds. Non-enzymatic component of the C5 convertase, also named C4bC2bC3b, composed of the serine protease complement C2b (C2), complement C3b, as well as complement C4b (C4). Non-enzymatic component of the C5 convertase of the alternative complement pathways composed of the serine protease complement CFB and complement C3b. Interacts with CFP; interaction takes place together with CFB in the alternative complement system and allows the complex to become active. Interacts with CR1 (via Sushi 8 and Sushi 9 domains). Interacts with CFH.</text>
</comment>
<comment type="subunit">
    <molecule>Complement C3d fragment</molecule>
    <text evidence="1">Interacts with CFH. Interacts with CR2.</text>
</comment>
<comment type="subunit">
    <molecule>Complement C3dg fragment</molecule>
    <text evidence="1">During pregnancy, C3dg exists as a complex (probably a 2:2:2 heterohexamer) with AGT and the proform of PRG2. Interacts with CR2 (via the N-terminal Sushi domains 1 and 2).</text>
</comment>
<comment type="subcellular location">
    <subcellularLocation>
        <location evidence="1">Secreted</location>
    </subcellularLocation>
</comment>
<comment type="subcellular location">
    <molecule>Complement C3b</molecule>
    <subcellularLocation>
        <location evidence="1">Secreted</location>
    </subcellularLocation>
    <subcellularLocation>
        <location evidence="1">Cell surface</location>
    </subcellularLocation>
    <text evidence="1">Covalently associated with the surface of pathogens: the internal thioester bond reacts with carbohydrate antigens on the target surface to form amide or ester bonds.</text>
</comment>
<comment type="subcellular location">
    <molecule>C3a anaphylatoxin</molecule>
    <subcellularLocation>
        <location evidence="1">Secreted</location>
    </subcellularLocation>
</comment>
<comment type="PTM">
    <text evidence="1">C3 precursor is first processed by the removal of 4 Arg residues, forming two chains, beta and alpha, linked by a disulfide bond. During activation of the complement systems, the alpha chain is cleaved into C3a and C3b by the C3 convertase: C3b stays linked to the beta chain, while C3a is released in the plasma. The alpha chain is cleaved by the serine protease complement C2b component of the C3 convertase to generate C3a and C3b following activation by the classical, lectin and GZMK complement systems. The alpha chain is cleaved by CFB component of the C3 convertase to generate C3a and C3b following activation by the alternative complement system.</text>
</comment>
<comment type="PTM">
    <molecule>C3a anaphylatoxin</molecule>
    <text evidence="1">C3a is further processed by carboxypeptidases to release the C-terminal arginine residue generating the acylation stimulating protein (ASP). Levels of ASP are increased in adipocytes in the postprandial period and by insulin and dietary chylomicrons.</text>
</comment>
<comment type="PTM">
    <molecule>Complement C3b</molecule>
    <text evidence="1">Complement C3b is rapidly split in two positions by factor I (CFI) and a cofactor (CFH) to form iC3b (inactivated C3b) and C3f which is released. CFI and CFH catalyze proteolytic degradation of already-deposited complement C3b. Then iC3b is slowly cleaved (possibly by CFI) to form C3c (beta chain + alpha' chain fragment 1 + alpha' chain fragment 2), C3dg and C3f. Other proteases produce other fragments such as C3d or C3g.</text>
</comment>
<comment type="PTM">
    <molecule>Complement C3b</molecule>
    <text evidence="1">Upon activation, the internal thioester bond reacts with carbohydrate antigens on the target surface to form amide or ester bonds, leading to covalent association with the surface of pathogens.</text>
</comment>
<comment type="PTM">
    <molecule>Complement C3b</molecule>
    <text evidence="1">Complement C3b interacts with complement C4b via a thioester linkage.</text>
</comment>
<comment type="PTM">
    <text evidence="1">Phosphorylated by FAM20C in the extracellular medium.</text>
</comment>
<protein>
    <recommendedName>
        <fullName>Complement C3</fullName>
    </recommendedName>
    <component>
        <recommendedName>
            <fullName>Complement C3 beta chain</fullName>
        </recommendedName>
    </component>
    <component>
        <recommendedName>
            <fullName>Complement C3 alpha chain</fullName>
        </recommendedName>
    </component>
    <component>
        <recommendedName>
            <fullName>C3a anaphylatoxin</fullName>
        </recommendedName>
    </component>
    <component>
        <recommendedName>
            <fullName>C3-beta-c</fullName>
            <shortName>C3bc</shortName>
        </recommendedName>
    </component>
    <component>
        <recommendedName>
            <fullName>Acylation stimulating protein</fullName>
            <shortName>ASP</shortName>
        </recommendedName>
        <alternativeName>
            <fullName>C3adesArg</fullName>
        </alternativeName>
    </component>
    <component>
        <recommendedName>
            <fullName>Complement C3b</fullName>
        </recommendedName>
        <alternativeName>
            <fullName>Complement C3b-alpha' chain</fullName>
        </alternativeName>
    </component>
    <component>
        <recommendedName>
            <fullName>Complement C3c alpha' chain fragment 1</fullName>
        </recommendedName>
    </component>
    <component>
        <recommendedName>
            <fullName>Complement C3dg fragment</fullName>
        </recommendedName>
    </component>
    <component>
        <recommendedName>
            <fullName>Complement C3g fragment</fullName>
        </recommendedName>
    </component>
    <component>
        <recommendedName>
            <fullName>Complement C3d fragment</fullName>
        </recommendedName>
    </component>
    <component>
        <recommendedName>
            <fullName>Complement C3f fragment</fullName>
        </recommendedName>
    </component>
    <component>
        <recommendedName>
            <fullName>Complement C3c alpha' chain fragment 2</fullName>
        </recommendedName>
    </component>
</protein>
<proteinExistence type="evidence at protein level"/>
<evidence type="ECO:0000250" key="1">
    <source>
        <dbReference type="UniProtKB" id="P01024"/>
    </source>
</evidence>
<evidence type="ECO:0000250" key="2">
    <source>
        <dbReference type="UniProtKB" id="P01026"/>
    </source>
</evidence>
<evidence type="ECO:0000255" key="3"/>
<evidence type="ECO:0000255" key="4">
    <source>
        <dbReference type="PROSITE-ProRule" id="PRU00022"/>
    </source>
</evidence>
<evidence type="ECO:0000255" key="5">
    <source>
        <dbReference type="PROSITE-ProRule" id="PRU00295"/>
    </source>
</evidence>
<evidence type="ECO:0000269" key="6">
    <source>
    </source>
</evidence>
<evidence type="ECO:0000305" key="7"/>
<evidence type="ECO:0007829" key="8">
    <source>
        <dbReference type="PDB" id="8CEM"/>
    </source>
</evidence>
<feature type="signal peptide" evidence="1">
    <location>
        <begin position="1"/>
        <end position="22"/>
    </location>
</feature>
<feature type="chain" id="PRO_0000236227" description="Complement C3">
    <location>
        <begin position="23"/>
        <end position="1661"/>
    </location>
</feature>
<feature type="chain" id="PRO_0000236228" description="Complement C3 beta chain" evidence="1">
    <location>
        <begin position="23"/>
        <end position="665"/>
    </location>
</feature>
<feature type="chain" id="PRO_0000430428" description="C3-beta-c" evidence="2">
    <location>
        <begin position="567"/>
        <end position="665"/>
    </location>
</feature>
<feature type="chain" id="PRO_0000236229" description="Complement C3 alpha chain" evidence="1">
    <location>
        <begin position="670"/>
        <end position="1661"/>
    </location>
</feature>
<feature type="chain" id="PRO_0000236230" description="C3a anaphylatoxin" evidence="1">
    <location>
        <begin position="670"/>
        <end position="746"/>
    </location>
</feature>
<feature type="chain" id="PRO_0000419934" description="Acylation stimulating protein" evidence="1">
    <location>
        <begin position="670"/>
        <end position="745"/>
    </location>
</feature>
<feature type="chain" id="PRO_0000236231" description="Complement C3b" evidence="1">
    <location>
        <begin position="747"/>
        <end position="1661"/>
    </location>
</feature>
<feature type="chain" id="PRO_0000273938" description="Complement C3c alpha' chain fragment 1" evidence="1">
    <location>
        <begin position="747"/>
        <end position="953"/>
    </location>
</feature>
<feature type="chain" id="PRO_0000273939" description="Complement C3dg fragment" evidence="1">
    <location>
        <begin position="954"/>
        <end position="1302"/>
    </location>
</feature>
<feature type="chain" id="PRO_0000273940" description="Complement C3g fragment" evidence="1">
    <location>
        <begin position="954"/>
        <end position="1000"/>
    </location>
</feature>
<feature type="chain" id="PRO_0000236232" description="Complement C3d fragment" evidence="1">
    <location>
        <begin position="1001"/>
        <end position="1302"/>
    </location>
</feature>
<feature type="peptide" id="PRO_0000273941" description="Complement C3f fragment" evidence="1">
    <location>
        <begin position="1303"/>
        <end position="1319"/>
    </location>
</feature>
<feature type="chain" id="PRO_0000273942" description="Complement C3c alpha' chain fragment 2" evidence="1">
    <location>
        <begin position="1320"/>
        <end position="1661"/>
    </location>
</feature>
<feature type="domain" description="Anaphylatoxin-like" evidence="4">
    <location>
        <begin position="691"/>
        <end position="726"/>
    </location>
</feature>
<feature type="domain" description="NTR" evidence="5">
    <location>
        <begin position="1516"/>
        <end position="1659"/>
    </location>
</feature>
<feature type="region of interest" description="Interaction with CFP/properdin" evidence="1">
    <location>
        <begin position="1632"/>
        <end position="1657"/>
    </location>
</feature>
<feature type="site" description="Cleavage; by carboxypeptidases" evidence="1">
    <location>
        <begin position="745"/>
        <end position="746"/>
    </location>
</feature>
<feature type="site" description="Cleavage; by C3 convertase" evidence="1">
    <location>
        <begin position="746"/>
        <end position="747"/>
    </location>
</feature>
<feature type="site" description="Cleavage; by factor I" evidence="1">
    <location>
        <begin position="953"/>
        <end position="954"/>
    </location>
</feature>
<feature type="site" description="Cleavage; by factor I" evidence="1">
    <location>
        <begin position="1302"/>
        <end position="1303"/>
    </location>
</feature>
<feature type="site" description="Cleavage; by factor I" evidence="1">
    <location>
        <begin position="1319"/>
        <end position="1320"/>
    </location>
</feature>
<feature type="site" description="Coordinates Mg(2+) for interaction with Complement factor B Bb fragment (CFB)" evidence="1">
    <location>
        <position position="1661"/>
    </location>
</feature>
<feature type="modified residue" description="Phosphoserine" evidence="1">
    <location>
        <position position="38"/>
    </location>
</feature>
<feature type="modified residue" description="Phosphoserine" evidence="1">
    <location>
        <position position="70"/>
    </location>
</feature>
<feature type="modified residue" description="Phosphoserine" evidence="1">
    <location>
        <position position="670"/>
    </location>
</feature>
<feature type="modified residue" description="Phosphoserine" evidence="1">
    <location>
        <position position="967"/>
    </location>
</feature>
<feature type="modified residue" description="Phosphoserine" evidence="1">
    <location>
        <position position="1320"/>
    </location>
</feature>
<feature type="modified residue" description="Phosphoserine" evidence="1">
    <location>
        <position position="1571"/>
    </location>
</feature>
<feature type="glycosylation site" description="N-linked (GlcNAc...) asparagine" evidence="3">
    <location>
        <position position="938"/>
    </location>
</feature>
<feature type="glycosylation site" description="N-linked (GlcNAc...) asparagine" evidence="3">
    <location>
        <position position="1649"/>
    </location>
</feature>
<feature type="disulfide bond" description="Interchain (between beta and alpha chains)" evidence="4 5">
    <location>
        <begin position="557"/>
        <end position="815"/>
    </location>
</feature>
<feature type="disulfide bond" evidence="1">
    <location>
        <begin position="625"/>
        <end position="660"/>
    </location>
</feature>
<feature type="disulfide bond" evidence="1">
    <location>
        <begin position="691"/>
        <end position="718"/>
    </location>
</feature>
<feature type="disulfide bond" evidence="1">
    <location>
        <begin position="692"/>
        <end position="725"/>
    </location>
</feature>
<feature type="disulfide bond" evidence="1">
    <location>
        <begin position="705"/>
        <end position="726"/>
    </location>
</feature>
<feature type="disulfide bond" evidence="1">
    <location>
        <begin position="872"/>
        <end position="1511"/>
    </location>
</feature>
<feature type="disulfide bond" evidence="1">
    <location>
        <begin position="1100"/>
        <end position="1157"/>
    </location>
</feature>
<feature type="disulfide bond" evidence="1">
    <location>
        <begin position="1357"/>
        <end position="1487"/>
    </location>
</feature>
<feature type="disulfide bond" evidence="1">
    <location>
        <begin position="1388"/>
        <end position="1456"/>
    </location>
</feature>
<feature type="disulfide bond" evidence="1">
    <location>
        <begin position="1504"/>
        <end position="1509"/>
    </location>
</feature>
<feature type="disulfide bond" evidence="1">
    <location>
        <begin position="1516"/>
        <end position="1588"/>
    </location>
</feature>
<feature type="disulfide bond" evidence="1">
    <location>
        <begin position="1535"/>
        <end position="1659"/>
    </location>
</feature>
<feature type="disulfide bond" evidence="1">
    <location>
        <begin position="1635"/>
        <end position="1644"/>
    </location>
</feature>
<feature type="cross-link" description="Isoglutamyl cysteine thioester (Cys-Gln)" evidence="1">
    <location>
        <begin position="1009"/>
        <end position="1012"/>
    </location>
</feature>
<feature type="sequence conflict" description="In Ref. 2; AAI12453." evidence="7" ref="2">
    <original>Y</original>
    <variation>N</variation>
    <location>
        <position position="533"/>
    </location>
</feature>
<feature type="sequence conflict" description="In Ref. 2; AAI12453." evidence="7" ref="2">
    <original>S</original>
    <variation>I</variation>
    <location>
        <position position="747"/>
    </location>
</feature>
<feature type="strand" evidence="8">
    <location>
        <begin position="25"/>
        <end position="34"/>
    </location>
</feature>
<feature type="strand" evidence="8">
    <location>
        <begin position="40"/>
        <end position="47"/>
    </location>
</feature>
<feature type="strand" evidence="8">
    <location>
        <begin position="53"/>
        <end position="61"/>
    </location>
</feature>
<feature type="turn" evidence="8">
    <location>
        <begin position="62"/>
        <end position="64"/>
    </location>
</feature>
<feature type="strand" evidence="8">
    <location>
        <begin position="67"/>
        <end position="76"/>
    </location>
</feature>
<feature type="turn" evidence="8">
    <location>
        <begin position="78"/>
        <end position="82"/>
    </location>
</feature>
<feature type="strand" evidence="8">
    <location>
        <begin position="83"/>
        <end position="88"/>
    </location>
</feature>
<feature type="turn" evidence="8">
    <location>
        <begin position="94"/>
        <end position="97"/>
    </location>
</feature>
<feature type="strand" evidence="8">
    <location>
        <begin position="99"/>
        <end position="101"/>
    </location>
</feature>
<feature type="strand" evidence="8">
    <location>
        <begin position="104"/>
        <end position="111"/>
    </location>
</feature>
<feature type="strand" evidence="8">
    <location>
        <begin position="114"/>
        <end position="122"/>
    </location>
</feature>
<feature type="strand" evidence="8">
    <location>
        <begin position="128"/>
        <end position="134"/>
    </location>
</feature>
<feature type="strand" evidence="8">
    <location>
        <begin position="136"/>
        <end position="138"/>
    </location>
</feature>
<feature type="strand" evidence="8">
    <location>
        <begin position="143"/>
        <end position="151"/>
    </location>
</feature>
<feature type="strand" evidence="8">
    <location>
        <begin position="161"/>
        <end position="167"/>
    </location>
</feature>
<feature type="strand" evidence="8">
    <location>
        <begin position="173"/>
        <end position="180"/>
    </location>
</feature>
<feature type="turn" evidence="8">
    <location>
        <begin position="182"/>
        <end position="186"/>
    </location>
</feature>
<feature type="strand" evidence="8">
    <location>
        <begin position="187"/>
        <end position="193"/>
    </location>
</feature>
<feature type="strand" evidence="8">
    <location>
        <begin position="201"/>
        <end position="211"/>
    </location>
</feature>
<feature type="strand" evidence="8">
    <location>
        <begin position="217"/>
        <end position="223"/>
    </location>
</feature>
<feature type="strand" evidence="8">
    <location>
        <begin position="230"/>
        <end position="243"/>
    </location>
</feature>
<feature type="strand" evidence="8">
    <location>
        <begin position="250"/>
        <end position="258"/>
    </location>
</feature>
<feature type="strand" evidence="8">
    <location>
        <begin position="266"/>
        <end position="275"/>
    </location>
</feature>
<feature type="strand" evidence="8">
    <location>
        <begin position="280"/>
        <end position="293"/>
    </location>
</feature>
<feature type="strand" evidence="8">
    <location>
        <begin position="296"/>
        <end position="301"/>
    </location>
</feature>
<feature type="helix" evidence="8">
    <location>
        <begin position="303"/>
        <end position="309"/>
    </location>
</feature>
<feature type="strand" evidence="8">
    <location>
        <begin position="310"/>
        <end position="312"/>
    </location>
</feature>
<feature type="helix" evidence="8">
    <location>
        <begin position="316"/>
        <end position="318"/>
    </location>
</feature>
<feature type="strand" evidence="8">
    <location>
        <begin position="322"/>
        <end position="331"/>
    </location>
</feature>
<feature type="strand" evidence="8">
    <location>
        <begin position="337"/>
        <end position="349"/>
    </location>
</feature>
<feature type="strand" evidence="8">
    <location>
        <begin position="353"/>
        <end position="355"/>
    </location>
</feature>
<feature type="strand" evidence="8">
    <location>
        <begin position="357"/>
        <end position="359"/>
    </location>
</feature>
<feature type="strand" evidence="8">
    <location>
        <begin position="361"/>
        <end position="363"/>
    </location>
</feature>
<feature type="strand" evidence="8">
    <location>
        <begin position="367"/>
        <end position="376"/>
    </location>
</feature>
<feature type="strand" evidence="8">
    <location>
        <begin position="387"/>
        <end position="390"/>
    </location>
</feature>
<feature type="turn" evidence="8">
    <location>
        <begin position="391"/>
        <end position="393"/>
    </location>
</feature>
<feature type="strand" evidence="8">
    <location>
        <begin position="396"/>
        <end position="398"/>
    </location>
</feature>
<feature type="strand" evidence="8">
    <location>
        <begin position="403"/>
        <end position="410"/>
    </location>
</feature>
<feature type="strand" evidence="8">
    <location>
        <begin position="418"/>
        <end position="424"/>
    </location>
</feature>
<feature type="helix" evidence="8">
    <location>
        <begin position="431"/>
        <end position="433"/>
    </location>
</feature>
<feature type="strand" evidence="8">
    <location>
        <begin position="436"/>
        <end position="443"/>
    </location>
</feature>
<feature type="helix" evidence="8">
    <location>
        <begin position="447"/>
        <end position="449"/>
    </location>
</feature>
<feature type="strand" evidence="8">
    <location>
        <begin position="453"/>
        <end position="457"/>
    </location>
</feature>
<feature type="strand" evidence="8">
    <location>
        <begin position="468"/>
        <end position="476"/>
    </location>
</feature>
<feature type="turn" evidence="8">
    <location>
        <begin position="479"/>
        <end position="481"/>
    </location>
</feature>
<feature type="strand" evidence="8">
    <location>
        <begin position="487"/>
        <end position="494"/>
    </location>
</feature>
<feature type="strand" evidence="8">
    <location>
        <begin position="497"/>
        <end position="505"/>
    </location>
</feature>
<feature type="strand" evidence="8">
    <location>
        <begin position="511"/>
        <end position="518"/>
    </location>
</feature>
<feature type="helix" evidence="8">
    <location>
        <begin position="521"/>
        <end position="523"/>
    </location>
</feature>
<feature type="strand" evidence="8">
    <location>
        <begin position="525"/>
        <end position="536"/>
    </location>
</feature>
<feature type="strand" evidence="8">
    <location>
        <begin position="542"/>
        <end position="553"/>
    </location>
</feature>
<feature type="strand" evidence="8">
    <location>
        <begin position="561"/>
        <end position="567"/>
    </location>
</feature>
<feature type="strand" evidence="8">
    <location>
        <begin position="571"/>
        <end position="573"/>
    </location>
</feature>
<feature type="strand" evidence="8">
    <location>
        <begin position="578"/>
        <end position="586"/>
    </location>
</feature>
<feature type="strand" evidence="8">
    <location>
        <begin position="590"/>
        <end position="597"/>
    </location>
</feature>
<feature type="helix" evidence="8">
    <location>
        <begin position="598"/>
        <end position="601"/>
    </location>
</feature>
<feature type="helix" evidence="8">
    <location>
        <begin position="605"/>
        <end position="607"/>
    </location>
</feature>
<feature type="helix" evidence="8">
    <location>
        <begin position="611"/>
        <end position="620"/>
    </location>
</feature>
<feature type="strand" evidence="8">
    <location>
        <begin position="626"/>
        <end position="628"/>
    </location>
</feature>
<feature type="helix" evidence="8">
    <location>
        <begin position="633"/>
        <end position="640"/>
    </location>
</feature>
<feature type="strand" evidence="8">
    <location>
        <begin position="642"/>
        <end position="649"/>
    </location>
</feature>
<feature type="helix" evidence="8">
    <location>
        <begin position="673"/>
        <end position="681"/>
    </location>
</feature>
<feature type="helix" evidence="8">
    <location>
        <begin position="687"/>
        <end position="695"/>
    </location>
</feature>
<feature type="helix" evidence="8">
    <location>
        <begin position="705"/>
        <end position="708"/>
    </location>
</feature>
<feature type="helix" evidence="8">
    <location>
        <begin position="709"/>
        <end position="711"/>
    </location>
</feature>
<feature type="helix" evidence="8">
    <location>
        <begin position="716"/>
        <end position="738"/>
    </location>
</feature>
<feature type="strand" evidence="8">
    <location>
        <begin position="785"/>
        <end position="793"/>
    </location>
</feature>
<feature type="strand" evidence="8">
    <location>
        <begin position="799"/>
        <end position="809"/>
    </location>
</feature>
<feature type="turn" evidence="8">
    <location>
        <begin position="810"/>
        <end position="812"/>
    </location>
</feature>
<feature type="strand" evidence="8">
    <location>
        <begin position="813"/>
        <end position="816"/>
    </location>
</feature>
<feature type="strand" evidence="8">
    <location>
        <begin position="820"/>
        <end position="824"/>
    </location>
</feature>
<feature type="strand" evidence="8">
    <location>
        <begin position="827"/>
        <end position="833"/>
    </location>
</feature>
<feature type="strand" evidence="8">
    <location>
        <begin position="844"/>
        <end position="852"/>
    </location>
</feature>
<feature type="strand" evidence="8">
    <location>
        <begin position="859"/>
        <end position="865"/>
    </location>
</feature>
<feature type="strand" evidence="8">
    <location>
        <begin position="871"/>
        <end position="874"/>
    </location>
</feature>
<feature type="strand" evidence="8">
    <location>
        <begin position="877"/>
        <end position="879"/>
    </location>
</feature>
<feature type="strand" evidence="8">
    <location>
        <begin position="881"/>
        <end position="887"/>
    </location>
</feature>
<feature type="strand" evidence="8">
    <location>
        <begin position="891"/>
        <end position="901"/>
    </location>
</feature>
<feature type="strand" evidence="8">
    <location>
        <begin position="905"/>
        <end position="915"/>
    </location>
</feature>
<feature type="strand" evidence="8">
    <location>
        <begin position="921"/>
        <end position="931"/>
    </location>
</feature>
<feature type="strand" evidence="8">
    <location>
        <begin position="933"/>
        <end position="946"/>
    </location>
</feature>
<feature type="turn" evidence="8">
    <location>
        <begin position="948"/>
        <end position="950"/>
    </location>
</feature>
<feature type="strand" evidence="8">
    <location>
        <begin position="956"/>
        <end position="961"/>
    </location>
</feature>
<feature type="strand" evidence="8">
    <location>
        <begin position="976"/>
        <end position="984"/>
    </location>
</feature>
<feature type="helix" evidence="8">
    <location>
        <begin position="987"/>
        <end position="994"/>
    </location>
</feature>
<feature type="helix" evidence="8">
    <location>
        <begin position="996"/>
        <end position="999"/>
    </location>
</feature>
<feature type="turn" evidence="8">
    <location>
        <begin position="1000"/>
        <end position="1002"/>
    </location>
</feature>
<feature type="helix" evidence="8">
    <location>
        <begin position="1012"/>
        <end position="1016"/>
    </location>
</feature>
<feature type="helix" evidence="8">
    <location>
        <begin position="1018"/>
        <end position="1030"/>
    </location>
</feature>
<feature type="turn" evidence="8">
    <location>
        <begin position="1033"/>
        <end position="1035"/>
    </location>
</feature>
<feature type="helix" evidence="8">
    <location>
        <begin position="1040"/>
        <end position="1055"/>
    </location>
</feature>
<feature type="helix" evidence="8">
    <location>
        <begin position="1056"/>
        <end position="1058"/>
    </location>
</feature>
<feature type="helix" evidence="8">
    <location>
        <begin position="1075"/>
        <end position="1088"/>
    </location>
</feature>
<feature type="turn" evidence="8">
    <location>
        <begin position="1089"/>
        <end position="1091"/>
    </location>
</feature>
<feature type="helix" evidence="8">
    <location>
        <begin position="1096"/>
        <end position="1110"/>
    </location>
</feature>
<feature type="helix" evidence="8">
    <location>
        <begin position="1126"/>
        <end position="1128"/>
    </location>
</feature>
<feature type="turn" evidence="8">
    <location>
        <begin position="1136"/>
        <end position="1139"/>
    </location>
</feature>
<feature type="helix" evidence="8">
    <location>
        <begin position="1140"/>
        <end position="1152"/>
    </location>
</feature>
<feature type="turn" evidence="8">
    <location>
        <begin position="1153"/>
        <end position="1160"/>
    </location>
</feature>
<feature type="helix" evidence="8">
    <location>
        <begin position="1164"/>
        <end position="1177"/>
    </location>
</feature>
<feature type="helix" evidence="8">
    <location>
        <begin position="1179"/>
        <end position="1181"/>
    </location>
</feature>
<feature type="helix" evidence="8">
    <location>
        <begin position="1185"/>
        <end position="1196"/>
    </location>
</feature>
<feature type="turn" evidence="8">
    <location>
        <begin position="1197"/>
        <end position="1199"/>
    </location>
</feature>
<feature type="helix" evidence="8">
    <location>
        <begin position="1204"/>
        <end position="1212"/>
    </location>
</feature>
<feature type="turn" evidence="8">
    <location>
        <begin position="1215"/>
        <end position="1217"/>
    </location>
</feature>
<feature type="helix" evidence="8">
    <location>
        <begin position="1226"/>
        <end position="1241"/>
    </location>
</feature>
<feature type="turn" evidence="8">
    <location>
        <begin position="1245"/>
        <end position="1247"/>
    </location>
</feature>
<feature type="helix" evidence="8">
    <location>
        <begin position="1249"/>
        <end position="1256"/>
    </location>
</feature>
<feature type="helix" evidence="8">
    <location>
        <begin position="1268"/>
        <end position="1284"/>
    </location>
</feature>
<feature type="turn" evidence="8">
    <location>
        <begin position="1287"/>
        <end position="1290"/>
    </location>
</feature>
<feature type="strand" evidence="8">
    <location>
        <begin position="1292"/>
        <end position="1298"/>
    </location>
</feature>
<feature type="strand" evidence="8">
    <location>
        <begin position="1302"/>
        <end position="1304"/>
    </location>
</feature>
<feature type="strand" evidence="8">
    <location>
        <begin position="1306"/>
        <end position="1315"/>
    </location>
</feature>
<feature type="strand" evidence="8">
    <location>
        <begin position="1317"/>
        <end position="1325"/>
    </location>
</feature>
<feature type="strand" evidence="8">
    <location>
        <begin position="1329"/>
        <end position="1337"/>
    </location>
</feature>
<feature type="strand" evidence="8">
    <location>
        <begin position="1339"/>
        <end position="1349"/>
    </location>
</feature>
<feature type="helix" evidence="8">
    <location>
        <begin position="1352"/>
        <end position="1354"/>
    </location>
</feature>
<feature type="strand" evidence="8">
    <location>
        <begin position="1359"/>
        <end position="1368"/>
    </location>
</feature>
<feature type="strand" evidence="8">
    <location>
        <begin position="1381"/>
        <end position="1391"/>
    </location>
</feature>
<feature type="strand" evidence="8">
    <location>
        <begin position="1393"/>
        <end position="1395"/>
    </location>
</feature>
<feature type="strand" evidence="8">
    <location>
        <begin position="1399"/>
        <end position="1405"/>
    </location>
</feature>
<feature type="strand" evidence="8">
    <location>
        <begin position="1410"/>
        <end position="1412"/>
    </location>
</feature>
<feature type="helix" evidence="8">
    <location>
        <begin position="1414"/>
        <end position="1421"/>
    </location>
</feature>
<feature type="strand" evidence="8">
    <location>
        <begin position="1422"/>
        <end position="1425"/>
    </location>
</feature>
<feature type="strand" evidence="8">
    <location>
        <begin position="1429"/>
        <end position="1434"/>
    </location>
</feature>
<feature type="strand" evidence="8">
    <location>
        <begin position="1436"/>
        <end position="1439"/>
    </location>
</feature>
<feature type="strand" evidence="8">
    <location>
        <begin position="1441"/>
        <end position="1447"/>
    </location>
</feature>
<feature type="strand" evidence="8">
    <location>
        <begin position="1451"/>
        <end position="1453"/>
    </location>
</feature>
<feature type="strand" evidence="8">
    <location>
        <begin position="1455"/>
        <end position="1463"/>
    </location>
</feature>
<feature type="strand" evidence="8">
    <location>
        <begin position="1467"/>
        <end position="1469"/>
    </location>
</feature>
<feature type="strand" evidence="8">
    <location>
        <begin position="1473"/>
        <end position="1481"/>
    </location>
</feature>
<feature type="strand" evidence="8">
    <location>
        <begin position="1485"/>
        <end position="1491"/>
    </location>
</feature>
<feature type="strand" evidence="8">
    <location>
        <begin position="1497"/>
        <end position="1501"/>
    </location>
</feature>
<feature type="helix" evidence="8">
    <location>
        <begin position="1507"/>
        <end position="1511"/>
    </location>
</feature>
<feature type="turn" evidence="8">
    <location>
        <begin position="1512"/>
        <end position="1516"/>
    </location>
</feature>
<feature type="helix" evidence="8">
    <location>
        <begin position="1528"/>
        <end position="1533"/>
    </location>
</feature>
<feature type="strand" evidence="8">
    <location>
        <begin position="1539"/>
        <end position="1552"/>
    </location>
</feature>
<feature type="strand" evidence="8">
    <location>
        <begin position="1554"/>
        <end position="1568"/>
    </location>
</feature>
<feature type="strand" evidence="8">
    <location>
        <begin position="1579"/>
        <end position="1585"/>
    </location>
</feature>
<feature type="helix" evidence="8">
    <location>
        <begin position="1588"/>
        <end position="1592"/>
    </location>
</feature>
<feature type="strand" evidence="8">
    <location>
        <begin position="1599"/>
        <end position="1605"/>
    </location>
</feature>
<feature type="helix" evidence="8">
    <location>
        <begin position="1606"/>
        <end position="1608"/>
    </location>
</feature>
<feature type="strand" evidence="8">
    <location>
        <begin position="1609"/>
        <end position="1611"/>
    </location>
</feature>
<feature type="strand" evidence="8">
    <location>
        <begin position="1617"/>
        <end position="1619"/>
    </location>
</feature>
<feature type="strand" evidence="8">
    <location>
        <begin position="1625"/>
        <end position="1629"/>
    </location>
</feature>
<feature type="helix" evidence="8">
    <location>
        <begin position="1634"/>
        <end position="1636"/>
    </location>
</feature>
<feature type="turn" evidence="8">
    <location>
        <begin position="1638"/>
        <end position="1640"/>
    </location>
</feature>
<feature type="helix" evidence="8">
    <location>
        <begin position="1641"/>
        <end position="1656"/>
    </location>
</feature>
<accession>Q2UVX4</accession>
<accession>Q2KIZ4</accession>
<reference key="1">
    <citation type="journal article" date="2006" name="J. Mol. Biol.">
        <title>The structure of bovine complement component 3 reveals the basis for thioester function.</title>
        <authorList>
            <person name="Fredslund F."/>
            <person name="Jenner L."/>
            <person name="Husted L.B."/>
            <person name="Nyborg J."/>
            <person name="Andersen G.R."/>
            <person name="Sottrup-Jensen L."/>
        </authorList>
    </citation>
    <scope>NUCLEOTIDE SEQUENCE [GENOMIC DNA]</scope>
    <scope>X-RAY CRYSTALLOGRAPHY (3.0 ANGSTROMS) OF C3</scope>
</reference>
<reference key="2">
    <citation type="submission" date="2006-01" db="EMBL/GenBank/DDBJ databases">
        <authorList>
            <consortium name="NIH - Mammalian Gene Collection (MGC) project"/>
        </authorList>
    </citation>
    <scope>NUCLEOTIDE SEQUENCE [LARGE SCALE MRNA]</scope>
    <source>
        <strain>Crossbred X Angus</strain>
        <tissue>Liver</tissue>
    </source>
</reference>
<reference key="3">
    <citation type="journal article" date="1993" name="Arch. Virol.">
        <title>Species selective interaction of Alphaherpesvirinae with the 'unspecific' immune system of the host.</title>
        <authorList>
            <person name="Huemer H.P."/>
            <person name="Larcher C."/>
            <person name="van Drunen Littel-van den Hurk S."/>
            <person name="Babiuk L.A."/>
        </authorList>
    </citation>
    <scope>INTERACTION WITH BHV-1 GLYCOPROTEIN C (MICROBIAL INFECTION)</scope>
</reference>
<organism>
    <name type="scientific">Bos taurus</name>
    <name type="common">Bovine</name>
    <dbReference type="NCBI Taxonomy" id="9913"/>
    <lineage>
        <taxon>Eukaryota</taxon>
        <taxon>Metazoa</taxon>
        <taxon>Chordata</taxon>
        <taxon>Craniata</taxon>
        <taxon>Vertebrata</taxon>
        <taxon>Euteleostomi</taxon>
        <taxon>Mammalia</taxon>
        <taxon>Eutheria</taxon>
        <taxon>Laurasiatheria</taxon>
        <taxon>Artiodactyla</taxon>
        <taxon>Ruminantia</taxon>
        <taxon>Pecora</taxon>
        <taxon>Bovidae</taxon>
        <taxon>Bovinae</taxon>
        <taxon>Bos</taxon>
    </lineage>
</organism>
<name>CO3_BOVIN</name>
<dbReference type="EMBL" id="AM086793">
    <property type="protein sequence ID" value="CAJ31249.1"/>
    <property type="molecule type" value="Genomic_DNA"/>
</dbReference>
<dbReference type="EMBL" id="BC112452">
    <property type="protein sequence ID" value="AAI12453.1"/>
    <property type="molecule type" value="mRNA"/>
</dbReference>
<dbReference type="RefSeq" id="NP_001035559.2">
    <property type="nucleotide sequence ID" value="NM_001040469.2"/>
</dbReference>
<dbReference type="RefSeq" id="XP_010805188.1">
    <property type="nucleotide sequence ID" value="XM_010806886.2"/>
</dbReference>
<dbReference type="PDB" id="8CEM">
    <property type="method" value="X-ray"/>
    <property type="resolution" value="3.00 A"/>
    <property type="chains" value="A/B=1-1661"/>
</dbReference>
<dbReference type="PDBsum" id="8CEM"/>
<dbReference type="SMR" id="Q2UVX4"/>
<dbReference type="FunCoup" id="Q2UVX4">
    <property type="interactions" value="632"/>
</dbReference>
<dbReference type="STRING" id="9913.ENSBTAP00000022979"/>
<dbReference type="MEROPS" id="I39.950"/>
<dbReference type="GlyCosmos" id="Q2UVX4">
    <property type="glycosylation" value="2 sites, No reported glycans"/>
</dbReference>
<dbReference type="GlyGen" id="Q2UVX4">
    <property type="glycosylation" value="3 sites, 1 O-linked glycan (1 site)"/>
</dbReference>
<dbReference type="PaxDb" id="9913-ENSBTAP00000022979"/>
<dbReference type="PeptideAtlas" id="Q2UVX4"/>
<dbReference type="Ensembl" id="ENSBTAT00000022979.6">
    <property type="protein sequence ID" value="ENSBTAP00000022979.5"/>
    <property type="gene ID" value="ENSBTAG00000017280.6"/>
</dbReference>
<dbReference type="GeneID" id="280677"/>
<dbReference type="KEGG" id="bta:280677"/>
<dbReference type="CTD" id="718"/>
<dbReference type="VEuPathDB" id="HostDB:ENSBTAG00000017280"/>
<dbReference type="VGNC" id="VGNC:26638">
    <property type="gene designation" value="C3"/>
</dbReference>
<dbReference type="eggNOG" id="KOG1366">
    <property type="taxonomic scope" value="Eukaryota"/>
</dbReference>
<dbReference type="GeneTree" id="ENSGT00940000154063"/>
<dbReference type="InParanoid" id="Q2UVX4"/>
<dbReference type="OMA" id="YNYRQNE"/>
<dbReference type="OrthoDB" id="6359008at2759"/>
<dbReference type="Reactome" id="R-BTA-173736">
    <property type="pathway name" value="Alternative complement activation"/>
</dbReference>
<dbReference type="Reactome" id="R-BTA-174577">
    <property type="pathway name" value="Activation of C3 and C5"/>
</dbReference>
<dbReference type="Reactome" id="R-BTA-198933">
    <property type="pathway name" value="Immunoregulatory interactions between a Lymphoid and a non-Lymphoid cell"/>
</dbReference>
<dbReference type="Reactome" id="R-BTA-375276">
    <property type="pathway name" value="Peptide ligand-binding receptors"/>
</dbReference>
<dbReference type="Reactome" id="R-BTA-381426">
    <property type="pathway name" value="Regulation of Insulin-like Growth Factor (IGF) transport and uptake by Insulin-like Growth Factor Binding Proteins (IGFBPs)"/>
</dbReference>
<dbReference type="Reactome" id="R-BTA-418594">
    <property type="pathway name" value="G alpha (i) signalling events"/>
</dbReference>
<dbReference type="Reactome" id="R-BTA-6798695">
    <property type="pathway name" value="Neutrophil degranulation"/>
</dbReference>
<dbReference type="Reactome" id="R-BTA-8957275">
    <property type="pathway name" value="Post-translational protein phosphorylation"/>
</dbReference>
<dbReference type="Reactome" id="R-BTA-977606">
    <property type="pathway name" value="Regulation of Complement cascade"/>
</dbReference>
<dbReference type="Proteomes" id="UP000009136">
    <property type="component" value="Chromosome 7"/>
</dbReference>
<dbReference type="Bgee" id="ENSBTAG00000017280">
    <property type="expression patterns" value="Expressed in liver and 104 other cell types or tissues"/>
</dbReference>
<dbReference type="GO" id="GO:0009986">
    <property type="term" value="C:cell surface"/>
    <property type="evidence" value="ECO:0007669"/>
    <property type="project" value="Ensembl"/>
</dbReference>
<dbReference type="GO" id="GO:0005615">
    <property type="term" value="C:extracellular space"/>
    <property type="evidence" value="ECO:0000318"/>
    <property type="project" value="GO_Central"/>
</dbReference>
<dbReference type="GO" id="GO:0032991">
    <property type="term" value="C:protein-containing complex"/>
    <property type="evidence" value="ECO:0007669"/>
    <property type="project" value="Ensembl"/>
</dbReference>
<dbReference type="GO" id="GO:0031715">
    <property type="term" value="F:C5L2 anaphylatoxin chemotactic receptor binding"/>
    <property type="evidence" value="ECO:0000250"/>
    <property type="project" value="UniProtKB"/>
</dbReference>
<dbReference type="GO" id="GO:0004866">
    <property type="term" value="F:endopeptidase inhibitor activity"/>
    <property type="evidence" value="ECO:0007669"/>
    <property type="project" value="InterPro"/>
</dbReference>
<dbReference type="GO" id="GO:0048018">
    <property type="term" value="F:receptor ligand activity"/>
    <property type="evidence" value="ECO:0007669"/>
    <property type="project" value="Ensembl"/>
</dbReference>
<dbReference type="GO" id="GO:0097242">
    <property type="term" value="P:amyloid-beta clearance"/>
    <property type="evidence" value="ECO:0007669"/>
    <property type="project" value="Ensembl"/>
</dbReference>
<dbReference type="GO" id="GO:0042113">
    <property type="term" value="P:B cell activation"/>
    <property type="evidence" value="ECO:0007669"/>
    <property type="project" value="Ensembl"/>
</dbReference>
<dbReference type="GO" id="GO:0006956">
    <property type="term" value="P:complement activation"/>
    <property type="evidence" value="ECO:0000318"/>
    <property type="project" value="GO_Central"/>
</dbReference>
<dbReference type="GO" id="GO:0006957">
    <property type="term" value="P:complement activation, alternative pathway"/>
    <property type="evidence" value="ECO:0007669"/>
    <property type="project" value="UniProtKB-KW"/>
</dbReference>
<dbReference type="GO" id="GO:0006958">
    <property type="term" value="P:complement activation, classical pathway"/>
    <property type="evidence" value="ECO:0007669"/>
    <property type="project" value="UniProtKB-KW"/>
</dbReference>
<dbReference type="GO" id="GO:0002430">
    <property type="term" value="P:complement receptor mediated signaling pathway"/>
    <property type="evidence" value="ECO:0007669"/>
    <property type="project" value="Ensembl"/>
</dbReference>
<dbReference type="GO" id="GO:0097278">
    <property type="term" value="P:complement-dependent cytotoxicity"/>
    <property type="evidence" value="ECO:0007669"/>
    <property type="project" value="Ensembl"/>
</dbReference>
<dbReference type="GO" id="GO:0150062">
    <property type="term" value="P:complement-mediated synapse pruning"/>
    <property type="evidence" value="ECO:0007669"/>
    <property type="project" value="Ensembl"/>
</dbReference>
<dbReference type="GO" id="GO:0006631">
    <property type="term" value="P:fatty acid metabolic process"/>
    <property type="evidence" value="ECO:0007669"/>
    <property type="project" value="UniProtKB-KW"/>
</dbReference>
<dbReference type="GO" id="GO:0006954">
    <property type="term" value="P:inflammatory response"/>
    <property type="evidence" value="ECO:0007669"/>
    <property type="project" value="UniProtKB-KW"/>
</dbReference>
<dbReference type="GO" id="GO:0016322">
    <property type="term" value="P:neuron remodeling"/>
    <property type="evidence" value="ECO:0007669"/>
    <property type="project" value="Ensembl"/>
</dbReference>
<dbReference type="GO" id="GO:0035846">
    <property type="term" value="P:oviduct epithelium development"/>
    <property type="evidence" value="ECO:0007669"/>
    <property type="project" value="Ensembl"/>
</dbReference>
<dbReference type="GO" id="GO:0001970">
    <property type="term" value="P:positive regulation of activation of membrane attack complex"/>
    <property type="evidence" value="ECO:0007669"/>
    <property type="project" value="Ensembl"/>
</dbReference>
<dbReference type="GO" id="GO:0045766">
    <property type="term" value="P:positive regulation of angiogenesis"/>
    <property type="evidence" value="ECO:0007669"/>
    <property type="project" value="Ensembl"/>
</dbReference>
<dbReference type="GO" id="GO:2000427">
    <property type="term" value="P:positive regulation of apoptotic cell clearance"/>
    <property type="evidence" value="ECO:0007669"/>
    <property type="project" value="Ensembl"/>
</dbReference>
<dbReference type="GO" id="GO:0010828">
    <property type="term" value="P:positive regulation of D-glucose transmembrane transport"/>
    <property type="evidence" value="ECO:0000250"/>
    <property type="project" value="UniProtKB"/>
</dbReference>
<dbReference type="GO" id="GO:0045745">
    <property type="term" value="P:positive regulation of G protein-coupled receptor signaling pathway"/>
    <property type="evidence" value="ECO:0000250"/>
    <property type="project" value="UniProtKB"/>
</dbReference>
<dbReference type="GO" id="GO:0010884">
    <property type="term" value="P:positive regulation of lipid storage"/>
    <property type="evidence" value="ECO:0000250"/>
    <property type="project" value="UniProtKB"/>
</dbReference>
<dbReference type="GO" id="GO:0060100">
    <property type="term" value="P:positive regulation of phagocytosis, engulfment"/>
    <property type="evidence" value="ECO:0007669"/>
    <property type="project" value="Ensembl"/>
</dbReference>
<dbReference type="GO" id="GO:0001934">
    <property type="term" value="P:positive regulation of protein phosphorylation"/>
    <property type="evidence" value="ECO:0000250"/>
    <property type="project" value="UniProtKB"/>
</dbReference>
<dbReference type="GO" id="GO:0048260">
    <property type="term" value="P:positive regulation of receptor-mediated endocytosis"/>
    <property type="evidence" value="ECO:0007669"/>
    <property type="project" value="Ensembl"/>
</dbReference>
<dbReference type="GO" id="GO:0001798">
    <property type="term" value="P:positive regulation of type IIa hypersensitivity"/>
    <property type="evidence" value="ECO:0007669"/>
    <property type="project" value="Ensembl"/>
</dbReference>
<dbReference type="GO" id="GO:0010575">
    <property type="term" value="P:positive regulation of vascular endothelial growth factor production"/>
    <property type="evidence" value="ECO:0007669"/>
    <property type="project" value="Ensembl"/>
</dbReference>
<dbReference type="GO" id="GO:0010866">
    <property type="term" value="P:regulation of triglyceride biosynthetic process"/>
    <property type="evidence" value="ECO:0000250"/>
    <property type="project" value="UniProtKB"/>
</dbReference>
<dbReference type="GO" id="GO:0009617">
    <property type="term" value="P:response to bacterium"/>
    <property type="evidence" value="ECO:0007669"/>
    <property type="project" value="Ensembl"/>
</dbReference>
<dbReference type="GO" id="GO:0150064">
    <property type="term" value="P:vertebrate eye-specific patterning"/>
    <property type="evidence" value="ECO:0007669"/>
    <property type="project" value="Ensembl"/>
</dbReference>
<dbReference type="CDD" id="cd00017">
    <property type="entry name" value="ANATO"/>
    <property type="match status" value="1"/>
</dbReference>
<dbReference type="CDD" id="cd02896">
    <property type="entry name" value="complement_C3_C4_C5"/>
    <property type="match status" value="1"/>
</dbReference>
<dbReference type="CDD" id="cd03583">
    <property type="entry name" value="NTR_complement_C3"/>
    <property type="match status" value="1"/>
</dbReference>
<dbReference type="FunFam" id="1.20.91.20:FF:000001">
    <property type="entry name" value="Complement C3"/>
    <property type="match status" value="1"/>
</dbReference>
<dbReference type="FunFam" id="1.50.10.20:FF:000008">
    <property type="entry name" value="Complement C3"/>
    <property type="match status" value="1"/>
</dbReference>
<dbReference type="FunFam" id="2.20.130.20:FF:000001">
    <property type="entry name" value="Complement C3"/>
    <property type="match status" value="1"/>
</dbReference>
<dbReference type="FunFam" id="2.40.50.120:FF:000013">
    <property type="entry name" value="Complement C3"/>
    <property type="match status" value="1"/>
</dbReference>
<dbReference type="FunFam" id="2.60.40.10:FF:001013">
    <property type="entry name" value="Complement C3"/>
    <property type="match status" value="1"/>
</dbReference>
<dbReference type="FunFam" id="2.60.40.1930:FF:000006">
    <property type="entry name" value="Complement C3"/>
    <property type="match status" value="1"/>
</dbReference>
<dbReference type="FunFam" id="2.60.40.1930:FF:000008">
    <property type="entry name" value="Complement C3"/>
    <property type="match status" value="1"/>
</dbReference>
<dbReference type="FunFam" id="2.60.40.690:FF:000004">
    <property type="entry name" value="Complement C3"/>
    <property type="match status" value="1"/>
</dbReference>
<dbReference type="FunFam" id="6.20.50.160:FF:000003">
    <property type="entry name" value="Complement C3"/>
    <property type="match status" value="1"/>
</dbReference>
<dbReference type="FunFam" id="2.60.40.10:FF:000155">
    <property type="entry name" value="complement C3 isoform X1"/>
    <property type="match status" value="1"/>
</dbReference>
<dbReference type="FunFam" id="2.60.40.1940:FF:000001">
    <property type="entry name" value="Complement component C3"/>
    <property type="match status" value="1"/>
</dbReference>
<dbReference type="Gene3D" id="1.50.10.20">
    <property type="match status" value="1"/>
</dbReference>
<dbReference type="Gene3D" id="2.20.130.20">
    <property type="match status" value="1"/>
</dbReference>
<dbReference type="Gene3D" id="2.40.50.120">
    <property type="match status" value="1"/>
</dbReference>
<dbReference type="Gene3D" id="2.60.120.1540">
    <property type="match status" value="1"/>
</dbReference>
<dbReference type="Gene3D" id="2.60.40.1930">
    <property type="match status" value="3"/>
</dbReference>
<dbReference type="Gene3D" id="2.60.40.1940">
    <property type="match status" value="1"/>
</dbReference>
<dbReference type="Gene3D" id="6.20.50.160">
    <property type="match status" value="1"/>
</dbReference>
<dbReference type="Gene3D" id="2.60.40.690">
    <property type="entry name" value="Alpha-macroglobulin, receptor-binding domain"/>
    <property type="match status" value="1"/>
</dbReference>
<dbReference type="Gene3D" id="1.20.91.20">
    <property type="entry name" value="Anaphylotoxins (complement system)"/>
    <property type="match status" value="1"/>
</dbReference>
<dbReference type="Gene3D" id="2.60.40.10">
    <property type="entry name" value="Immunoglobulins"/>
    <property type="match status" value="2"/>
</dbReference>
<dbReference type="InterPro" id="IPR009048">
    <property type="entry name" value="A-macroglobulin_rcpt-bd"/>
</dbReference>
<dbReference type="InterPro" id="IPR036595">
    <property type="entry name" value="A-macroglobulin_rcpt-bd_sf"/>
</dbReference>
<dbReference type="InterPro" id="IPR050473">
    <property type="entry name" value="A2M/Complement_sys"/>
</dbReference>
<dbReference type="InterPro" id="IPR011625">
    <property type="entry name" value="A2M_N_BRD"/>
</dbReference>
<dbReference type="InterPro" id="IPR047565">
    <property type="entry name" value="Alpha-macroglob_thiol-ester_cl"/>
</dbReference>
<dbReference type="InterPro" id="IPR011626">
    <property type="entry name" value="Alpha-macroglobulin_TED"/>
</dbReference>
<dbReference type="InterPro" id="IPR000020">
    <property type="entry name" value="Anaphylatoxin/fibulin"/>
</dbReference>
<dbReference type="InterPro" id="IPR018081">
    <property type="entry name" value="Anaphylatoxin_comp_syst"/>
</dbReference>
<dbReference type="InterPro" id="IPR001840">
    <property type="entry name" value="Anaphylatoxn_comp_syst_dom"/>
</dbReference>
<dbReference type="InterPro" id="IPR041425">
    <property type="entry name" value="C3/4/5_MG1"/>
</dbReference>
<dbReference type="InterPro" id="IPR049466">
    <property type="entry name" value="C3_CUB1"/>
</dbReference>
<dbReference type="InterPro" id="IPR048848">
    <property type="entry name" value="C3_CUB2"/>
</dbReference>
<dbReference type="InterPro" id="IPR013783">
    <property type="entry name" value="Ig-like_fold"/>
</dbReference>
<dbReference type="InterPro" id="IPR001599">
    <property type="entry name" value="Macroglobln_a2"/>
</dbReference>
<dbReference type="InterPro" id="IPR019742">
    <property type="entry name" value="MacrogloblnA2_CS"/>
</dbReference>
<dbReference type="InterPro" id="IPR002890">
    <property type="entry name" value="MG2"/>
</dbReference>
<dbReference type="InterPro" id="IPR041555">
    <property type="entry name" value="MG3"/>
</dbReference>
<dbReference type="InterPro" id="IPR040839">
    <property type="entry name" value="MG4"/>
</dbReference>
<dbReference type="InterPro" id="IPR001134">
    <property type="entry name" value="Netrin_domain"/>
</dbReference>
<dbReference type="InterPro" id="IPR018933">
    <property type="entry name" value="Netrin_module_non-TIMP"/>
</dbReference>
<dbReference type="InterPro" id="IPR035815">
    <property type="entry name" value="NTR_complement_C3"/>
</dbReference>
<dbReference type="InterPro" id="IPR008930">
    <property type="entry name" value="Terpenoid_cyclase/PrenylTrfase"/>
</dbReference>
<dbReference type="InterPro" id="IPR008993">
    <property type="entry name" value="TIMP-like_OB-fold"/>
</dbReference>
<dbReference type="PANTHER" id="PTHR11412:SF81">
    <property type="entry name" value="COMPLEMENT C3"/>
    <property type="match status" value="1"/>
</dbReference>
<dbReference type="PANTHER" id="PTHR11412">
    <property type="entry name" value="MACROGLOBULIN / COMPLEMENT"/>
    <property type="match status" value="1"/>
</dbReference>
<dbReference type="Pfam" id="PF00207">
    <property type="entry name" value="A2M"/>
    <property type="match status" value="1"/>
</dbReference>
<dbReference type="Pfam" id="PF07703">
    <property type="entry name" value="A2M_BRD"/>
    <property type="match status" value="1"/>
</dbReference>
<dbReference type="Pfam" id="PF07677">
    <property type="entry name" value="A2M_recep"/>
    <property type="match status" value="1"/>
</dbReference>
<dbReference type="Pfam" id="PF01821">
    <property type="entry name" value="ANATO"/>
    <property type="match status" value="1"/>
</dbReference>
<dbReference type="Pfam" id="PF21406">
    <property type="entry name" value="C3_CUB1"/>
    <property type="match status" value="1"/>
</dbReference>
<dbReference type="Pfam" id="PF21308">
    <property type="entry name" value="C3_CUB2"/>
    <property type="match status" value="1"/>
</dbReference>
<dbReference type="Pfam" id="PF17790">
    <property type="entry name" value="MG1"/>
    <property type="match status" value="1"/>
</dbReference>
<dbReference type="Pfam" id="PF01835">
    <property type="entry name" value="MG2"/>
    <property type="match status" value="1"/>
</dbReference>
<dbReference type="Pfam" id="PF17791">
    <property type="entry name" value="MG3"/>
    <property type="match status" value="1"/>
</dbReference>
<dbReference type="Pfam" id="PF17789">
    <property type="entry name" value="MG4"/>
    <property type="match status" value="1"/>
</dbReference>
<dbReference type="Pfam" id="PF01759">
    <property type="entry name" value="NTR"/>
    <property type="match status" value="1"/>
</dbReference>
<dbReference type="Pfam" id="PF07678">
    <property type="entry name" value="TED_complement"/>
    <property type="match status" value="1"/>
</dbReference>
<dbReference type="PRINTS" id="PR00004">
    <property type="entry name" value="ANAPHYLATOXN"/>
</dbReference>
<dbReference type="SFLD" id="SFLDG01179">
    <property type="entry name" value="Complement_C3/C4_Like"/>
    <property type="match status" value="1"/>
</dbReference>
<dbReference type="SMART" id="SM01360">
    <property type="entry name" value="A2M"/>
    <property type="match status" value="1"/>
</dbReference>
<dbReference type="SMART" id="SM01359">
    <property type="entry name" value="A2M_N_2"/>
    <property type="match status" value="1"/>
</dbReference>
<dbReference type="SMART" id="SM01361">
    <property type="entry name" value="A2M_recep"/>
    <property type="match status" value="1"/>
</dbReference>
<dbReference type="SMART" id="SM00104">
    <property type="entry name" value="ANATO"/>
    <property type="match status" value="1"/>
</dbReference>
<dbReference type="SMART" id="SM00643">
    <property type="entry name" value="C345C"/>
    <property type="match status" value="1"/>
</dbReference>
<dbReference type="SMART" id="SM01419">
    <property type="entry name" value="Thiol-ester_cl"/>
    <property type="match status" value="1"/>
</dbReference>
<dbReference type="SUPFAM" id="SSF49410">
    <property type="entry name" value="Alpha-macroglobulin receptor domain"/>
    <property type="match status" value="1"/>
</dbReference>
<dbReference type="SUPFAM" id="SSF47686">
    <property type="entry name" value="Anaphylotoxins (complement system)"/>
    <property type="match status" value="1"/>
</dbReference>
<dbReference type="SUPFAM" id="SSF48239">
    <property type="entry name" value="Terpenoid cyclases/Protein prenyltransferases"/>
    <property type="match status" value="1"/>
</dbReference>
<dbReference type="SUPFAM" id="SSF50242">
    <property type="entry name" value="TIMP-like"/>
    <property type="match status" value="1"/>
</dbReference>
<dbReference type="PROSITE" id="PS00477">
    <property type="entry name" value="ALPHA_2_MACROGLOBULIN"/>
    <property type="match status" value="1"/>
</dbReference>
<dbReference type="PROSITE" id="PS01178">
    <property type="entry name" value="ANAPHYLATOXIN_2"/>
    <property type="match status" value="1"/>
</dbReference>
<dbReference type="PROSITE" id="PS50189">
    <property type="entry name" value="NTR"/>
    <property type="match status" value="1"/>
</dbReference>